<protein>
    <recommendedName>
        <fullName evidence="1">S-ribosylhomocysteine lyase</fullName>
        <ecNumber evidence="1">4.4.1.21</ecNumber>
    </recommendedName>
    <alternativeName>
        <fullName evidence="1">AI-2 synthesis protein</fullName>
    </alternativeName>
    <alternativeName>
        <fullName evidence="1">Autoinducer-2 production protein LuxS</fullName>
    </alternativeName>
</protein>
<dbReference type="EC" id="4.4.1.21" evidence="1"/>
<dbReference type="EMBL" id="CP001139">
    <property type="protein sequence ID" value="ACH66509.1"/>
    <property type="molecule type" value="Genomic_DNA"/>
</dbReference>
<dbReference type="RefSeq" id="WP_005417795.1">
    <property type="nucleotide sequence ID" value="NC_011184.1"/>
</dbReference>
<dbReference type="SMR" id="B5FAE1"/>
<dbReference type="KEGG" id="vfm:VFMJ11_0557"/>
<dbReference type="HOGENOM" id="CLU_107531_2_0_6"/>
<dbReference type="Proteomes" id="UP000001857">
    <property type="component" value="Chromosome I"/>
</dbReference>
<dbReference type="GO" id="GO:0005506">
    <property type="term" value="F:iron ion binding"/>
    <property type="evidence" value="ECO:0007669"/>
    <property type="project" value="InterPro"/>
</dbReference>
<dbReference type="GO" id="GO:0043768">
    <property type="term" value="F:S-ribosylhomocysteine lyase activity"/>
    <property type="evidence" value="ECO:0007669"/>
    <property type="project" value="UniProtKB-UniRule"/>
</dbReference>
<dbReference type="GO" id="GO:0009372">
    <property type="term" value="P:quorum sensing"/>
    <property type="evidence" value="ECO:0007669"/>
    <property type="project" value="UniProtKB-UniRule"/>
</dbReference>
<dbReference type="FunFam" id="3.30.1360.80:FF:000001">
    <property type="entry name" value="S-ribosylhomocysteine lyase"/>
    <property type="match status" value="1"/>
</dbReference>
<dbReference type="Gene3D" id="3.30.1360.80">
    <property type="entry name" value="S-ribosylhomocysteinase (LuxS)"/>
    <property type="match status" value="1"/>
</dbReference>
<dbReference type="HAMAP" id="MF_00091">
    <property type="entry name" value="LuxS"/>
    <property type="match status" value="1"/>
</dbReference>
<dbReference type="InterPro" id="IPR037005">
    <property type="entry name" value="LuxS_sf"/>
</dbReference>
<dbReference type="InterPro" id="IPR011249">
    <property type="entry name" value="Metalloenz_LuxS/M16"/>
</dbReference>
<dbReference type="InterPro" id="IPR003815">
    <property type="entry name" value="S-ribosylhomocysteinase"/>
</dbReference>
<dbReference type="NCBIfam" id="NF002602">
    <property type="entry name" value="PRK02260.1-2"/>
    <property type="match status" value="1"/>
</dbReference>
<dbReference type="PANTHER" id="PTHR35799">
    <property type="entry name" value="S-RIBOSYLHOMOCYSTEINE LYASE"/>
    <property type="match status" value="1"/>
</dbReference>
<dbReference type="PANTHER" id="PTHR35799:SF1">
    <property type="entry name" value="S-RIBOSYLHOMOCYSTEINE LYASE"/>
    <property type="match status" value="1"/>
</dbReference>
<dbReference type="Pfam" id="PF02664">
    <property type="entry name" value="LuxS"/>
    <property type="match status" value="1"/>
</dbReference>
<dbReference type="PIRSF" id="PIRSF006160">
    <property type="entry name" value="AI2"/>
    <property type="match status" value="1"/>
</dbReference>
<dbReference type="PRINTS" id="PR01487">
    <property type="entry name" value="LUXSPROTEIN"/>
</dbReference>
<dbReference type="SUPFAM" id="SSF63411">
    <property type="entry name" value="LuxS/MPP-like metallohydrolase"/>
    <property type="match status" value="1"/>
</dbReference>
<sequence>MPLLDSFTVDHTRMEAPAVRVAKTMQTPKGDTITVFDLRFTAPNKDILSEKGIHTLEHLYAGFMRNHLNGSGVEIIDISPMGCRTGFYMSLIGTPAEQAVADAWVSSMEDVLKVEAQNKIPELNEYQCGTYEMHSLDEAKAIATTVLASGISVNKNDELALSDSMLKELSNH</sequence>
<comment type="function">
    <text evidence="1">Involved in the synthesis of autoinducer 2 (AI-2) which is secreted by bacteria and is used to communicate both the cell density and the metabolic potential of the environment. The regulation of gene expression in response to changes in cell density is called quorum sensing. Catalyzes the transformation of S-ribosylhomocysteine (RHC) to homocysteine (HC) and 4,5-dihydroxy-2,3-pentadione (DPD).</text>
</comment>
<comment type="catalytic activity">
    <reaction evidence="1">
        <text>S-(5-deoxy-D-ribos-5-yl)-L-homocysteine = (S)-4,5-dihydroxypentane-2,3-dione + L-homocysteine</text>
        <dbReference type="Rhea" id="RHEA:17753"/>
        <dbReference type="ChEBI" id="CHEBI:29484"/>
        <dbReference type="ChEBI" id="CHEBI:58195"/>
        <dbReference type="ChEBI" id="CHEBI:58199"/>
        <dbReference type="EC" id="4.4.1.21"/>
    </reaction>
</comment>
<comment type="cofactor">
    <cofactor evidence="1">
        <name>Fe cation</name>
        <dbReference type="ChEBI" id="CHEBI:24875"/>
    </cofactor>
    <text evidence="1">Binds 1 Fe cation per subunit.</text>
</comment>
<comment type="subunit">
    <text evidence="1">Homodimer.</text>
</comment>
<comment type="similarity">
    <text evidence="1">Belongs to the LuxS family.</text>
</comment>
<accession>B5FAE1</accession>
<feature type="chain" id="PRO_1000093334" description="S-ribosylhomocysteine lyase">
    <location>
        <begin position="1"/>
        <end position="172"/>
    </location>
</feature>
<feature type="binding site" evidence="1">
    <location>
        <position position="54"/>
    </location>
    <ligand>
        <name>Fe cation</name>
        <dbReference type="ChEBI" id="CHEBI:24875"/>
    </ligand>
</feature>
<feature type="binding site" evidence="1">
    <location>
        <position position="58"/>
    </location>
    <ligand>
        <name>Fe cation</name>
        <dbReference type="ChEBI" id="CHEBI:24875"/>
    </ligand>
</feature>
<feature type="binding site" evidence="1">
    <location>
        <position position="128"/>
    </location>
    <ligand>
        <name>Fe cation</name>
        <dbReference type="ChEBI" id="CHEBI:24875"/>
    </ligand>
</feature>
<gene>
    <name evidence="1" type="primary">luxS</name>
    <name type="ordered locus">VFMJ11_0557</name>
</gene>
<keyword id="KW-0071">Autoinducer synthesis</keyword>
<keyword id="KW-0408">Iron</keyword>
<keyword id="KW-0456">Lyase</keyword>
<keyword id="KW-0479">Metal-binding</keyword>
<keyword id="KW-0673">Quorum sensing</keyword>
<reference key="1">
    <citation type="submission" date="2008-08" db="EMBL/GenBank/DDBJ databases">
        <title>Complete sequence of Vibrio fischeri strain MJ11.</title>
        <authorList>
            <person name="Mandel M.J."/>
            <person name="Stabb E.V."/>
            <person name="Ruby E.G."/>
            <person name="Ferriera S."/>
            <person name="Johnson J."/>
            <person name="Kravitz S."/>
            <person name="Beeson K."/>
            <person name="Sutton G."/>
            <person name="Rogers Y.-H."/>
            <person name="Friedman R."/>
            <person name="Frazier M."/>
            <person name="Venter J.C."/>
        </authorList>
    </citation>
    <scope>NUCLEOTIDE SEQUENCE [LARGE SCALE GENOMIC DNA]</scope>
    <source>
        <strain>MJ11</strain>
    </source>
</reference>
<organism>
    <name type="scientific">Aliivibrio fischeri (strain MJ11)</name>
    <name type="common">Vibrio fischeri</name>
    <dbReference type="NCBI Taxonomy" id="388396"/>
    <lineage>
        <taxon>Bacteria</taxon>
        <taxon>Pseudomonadati</taxon>
        <taxon>Pseudomonadota</taxon>
        <taxon>Gammaproteobacteria</taxon>
        <taxon>Vibrionales</taxon>
        <taxon>Vibrionaceae</taxon>
        <taxon>Aliivibrio</taxon>
    </lineage>
</organism>
<name>LUXS_ALIFM</name>
<proteinExistence type="inferred from homology"/>
<evidence type="ECO:0000255" key="1">
    <source>
        <dbReference type="HAMAP-Rule" id="MF_00091"/>
    </source>
</evidence>